<sequence>MQLFVRAQELHTLEVTGQETVAQIKDHVASLEGIAPEDQVVLLAGSPLEDEATLGQCGVEALTTLEVAGRMLGGKVHGSLARAGKVRGQTPKVAKQEKKKKKTGRAKRRMQYNRRFVNVVPTFGKKKGPNANS</sequence>
<evidence type="ECO:0000250" key="1">
    <source>
        <dbReference type="UniProtKB" id="P62861"/>
    </source>
</evidence>
<evidence type="ECO:0000256" key="2">
    <source>
        <dbReference type="SAM" id="MobiDB-lite"/>
    </source>
</evidence>
<evidence type="ECO:0000269" key="3">
    <source>
    </source>
</evidence>
<evidence type="ECO:0000305" key="4"/>
<evidence type="ECO:0007744" key="5">
    <source>
        <dbReference type="PDB" id="7CPU"/>
    </source>
</evidence>
<evidence type="ECO:0007744" key="6">
    <source>
        <dbReference type="PDB" id="7CPV"/>
    </source>
</evidence>
<evidence type="ECO:0007744" key="7">
    <source>
    </source>
</evidence>
<accession>P62862</accession>
<accession>P35545</accession>
<accession>Q05472</accession>
<accession>Q642K5</accession>
<accession>Q95261</accession>
<accession>Q9JJ24</accession>
<protein>
    <recommendedName>
        <fullName evidence="4">Ubiquitin-like FUBI-ribosomal protein eS30 fusion protein</fullName>
    </recommendedName>
    <alternativeName>
        <fullName evidence="4">FAU ubiquitin-like and ribosomal protein S30</fullName>
    </alternativeName>
    <component>
        <recommendedName>
            <fullName>Ubiquitin-like protein FUBI</fullName>
        </recommendedName>
    </component>
    <component>
        <recommendedName>
            <fullName>Small ribosomal subunit protein eS30</fullName>
        </recommendedName>
        <alternativeName>
            <fullName>40S ribosomal protein S30</fullName>
        </alternativeName>
    </component>
</protein>
<name>RS30_MOUSE</name>
<reference key="1">
    <citation type="journal article" date="1993" name="Oncogene">
        <title>fau cDNA encodes a ubiquitin-like-S30 fusion protein and is expressed as an antisense sequence in the Finkel-Biskis-Reilly murine sarcoma virus.</title>
        <authorList>
            <person name="Michiels L."/>
            <person name="van der Rauwelaert E."/>
            <person name="van Hasselt F."/>
            <person name="Kas K."/>
            <person name="Merregaert J."/>
        </authorList>
    </citation>
    <scope>NUCLEOTIDE SEQUENCE [MRNA]</scope>
    <source>
        <strain>SWR/J</strain>
    </source>
</reference>
<reference key="2">
    <citation type="journal article" date="1995" name="Proc. Natl. Acad. Sci. U.S.A.">
        <title>Molecular cloning and characterization of a cDNA encoding monoclonal nonspecific suppressor factor.</title>
        <authorList>
            <person name="Nakamura M."/>
            <person name="Xavier R.M."/>
            <person name="Tsunematsu T."/>
            <person name="Tanigawa Y."/>
        </authorList>
    </citation>
    <scope>NUCLEOTIDE SEQUENCE [MRNA]</scope>
    <source>
        <strain>BALB/cJ</strain>
    </source>
</reference>
<reference key="3">
    <citation type="journal article" date="1995" name="Genomics">
        <title>The mouse Fau gene: genomic structure, chromosomal localization, and characterization of two retropseudogenes.</title>
        <authorList>
            <person name="Casteels D."/>
            <person name="Poirier C."/>
            <person name="Guenet J.-L."/>
            <person name="Merregaert J."/>
        </authorList>
    </citation>
    <scope>NUCLEOTIDE SEQUENCE [GENOMIC DNA]</scope>
    <source>
        <strain>BALB/cJ</strain>
        <tissue>Liver</tissue>
    </source>
</reference>
<reference key="4">
    <citation type="submission" date="1999-05" db="EMBL/GenBank/DDBJ databases">
        <title>Identification of monoclonal non-specific suppressor factor beta as one of the genes differentially expressed at implantation sites compared to interimplantation sites in the mouse uterus.</title>
        <authorList>
            <person name="Nie G.-Y."/>
            <person name="Li Y."/>
            <person name="Salamonsen L.A."/>
            <person name="Clements J.A."/>
            <person name="Findlay J.K."/>
        </authorList>
    </citation>
    <scope>NUCLEOTIDE SEQUENCE</scope>
    <source>
        <strain>Swiss OB</strain>
    </source>
</reference>
<reference key="5">
    <citation type="journal article" date="2005" name="Science">
        <title>The transcriptional landscape of the mammalian genome.</title>
        <authorList>
            <person name="Carninci P."/>
            <person name="Kasukawa T."/>
            <person name="Katayama S."/>
            <person name="Gough J."/>
            <person name="Frith M.C."/>
            <person name="Maeda N."/>
            <person name="Oyama R."/>
            <person name="Ravasi T."/>
            <person name="Lenhard B."/>
            <person name="Wells C."/>
            <person name="Kodzius R."/>
            <person name="Shimokawa K."/>
            <person name="Bajic V.B."/>
            <person name="Brenner S.E."/>
            <person name="Batalov S."/>
            <person name="Forrest A.R."/>
            <person name="Zavolan M."/>
            <person name="Davis M.J."/>
            <person name="Wilming L.G."/>
            <person name="Aidinis V."/>
            <person name="Allen J.E."/>
            <person name="Ambesi-Impiombato A."/>
            <person name="Apweiler R."/>
            <person name="Aturaliya R.N."/>
            <person name="Bailey T.L."/>
            <person name="Bansal M."/>
            <person name="Baxter L."/>
            <person name="Beisel K.W."/>
            <person name="Bersano T."/>
            <person name="Bono H."/>
            <person name="Chalk A.M."/>
            <person name="Chiu K.P."/>
            <person name="Choudhary V."/>
            <person name="Christoffels A."/>
            <person name="Clutterbuck D.R."/>
            <person name="Crowe M.L."/>
            <person name="Dalla E."/>
            <person name="Dalrymple B.P."/>
            <person name="de Bono B."/>
            <person name="Della Gatta G."/>
            <person name="di Bernardo D."/>
            <person name="Down T."/>
            <person name="Engstrom P."/>
            <person name="Fagiolini M."/>
            <person name="Faulkner G."/>
            <person name="Fletcher C.F."/>
            <person name="Fukushima T."/>
            <person name="Furuno M."/>
            <person name="Futaki S."/>
            <person name="Gariboldi M."/>
            <person name="Georgii-Hemming P."/>
            <person name="Gingeras T.R."/>
            <person name="Gojobori T."/>
            <person name="Green R.E."/>
            <person name="Gustincich S."/>
            <person name="Harbers M."/>
            <person name="Hayashi Y."/>
            <person name="Hensch T.K."/>
            <person name="Hirokawa N."/>
            <person name="Hill D."/>
            <person name="Huminiecki L."/>
            <person name="Iacono M."/>
            <person name="Ikeo K."/>
            <person name="Iwama A."/>
            <person name="Ishikawa T."/>
            <person name="Jakt M."/>
            <person name="Kanapin A."/>
            <person name="Katoh M."/>
            <person name="Kawasawa Y."/>
            <person name="Kelso J."/>
            <person name="Kitamura H."/>
            <person name="Kitano H."/>
            <person name="Kollias G."/>
            <person name="Krishnan S.P."/>
            <person name="Kruger A."/>
            <person name="Kummerfeld S.K."/>
            <person name="Kurochkin I.V."/>
            <person name="Lareau L.F."/>
            <person name="Lazarevic D."/>
            <person name="Lipovich L."/>
            <person name="Liu J."/>
            <person name="Liuni S."/>
            <person name="McWilliam S."/>
            <person name="Madan Babu M."/>
            <person name="Madera M."/>
            <person name="Marchionni L."/>
            <person name="Matsuda H."/>
            <person name="Matsuzawa S."/>
            <person name="Miki H."/>
            <person name="Mignone F."/>
            <person name="Miyake S."/>
            <person name="Morris K."/>
            <person name="Mottagui-Tabar S."/>
            <person name="Mulder N."/>
            <person name="Nakano N."/>
            <person name="Nakauchi H."/>
            <person name="Ng P."/>
            <person name="Nilsson R."/>
            <person name="Nishiguchi S."/>
            <person name="Nishikawa S."/>
            <person name="Nori F."/>
            <person name="Ohara O."/>
            <person name="Okazaki Y."/>
            <person name="Orlando V."/>
            <person name="Pang K.C."/>
            <person name="Pavan W.J."/>
            <person name="Pavesi G."/>
            <person name="Pesole G."/>
            <person name="Petrovsky N."/>
            <person name="Piazza S."/>
            <person name="Reed J."/>
            <person name="Reid J.F."/>
            <person name="Ring B.Z."/>
            <person name="Ringwald M."/>
            <person name="Rost B."/>
            <person name="Ruan Y."/>
            <person name="Salzberg S.L."/>
            <person name="Sandelin A."/>
            <person name="Schneider C."/>
            <person name="Schoenbach C."/>
            <person name="Sekiguchi K."/>
            <person name="Semple C.A."/>
            <person name="Seno S."/>
            <person name="Sessa L."/>
            <person name="Sheng Y."/>
            <person name="Shibata Y."/>
            <person name="Shimada H."/>
            <person name="Shimada K."/>
            <person name="Silva D."/>
            <person name="Sinclair B."/>
            <person name="Sperling S."/>
            <person name="Stupka E."/>
            <person name="Sugiura K."/>
            <person name="Sultana R."/>
            <person name="Takenaka Y."/>
            <person name="Taki K."/>
            <person name="Tammoja K."/>
            <person name="Tan S.L."/>
            <person name="Tang S."/>
            <person name="Taylor M.S."/>
            <person name="Tegner J."/>
            <person name="Teichmann S.A."/>
            <person name="Ueda H.R."/>
            <person name="van Nimwegen E."/>
            <person name="Verardo R."/>
            <person name="Wei C.L."/>
            <person name="Yagi K."/>
            <person name="Yamanishi H."/>
            <person name="Zabarovsky E."/>
            <person name="Zhu S."/>
            <person name="Zimmer A."/>
            <person name="Hide W."/>
            <person name="Bult C."/>
            <person name="Grimmond S.M."/>
            <person name="Teasdale R.D."/>
            <person name="Liu E.T."/>
            <person name="Brusic V."/>
            <person name="Quackenbush J."/>
            <person name="Wahlestedt C."/>
            <person name="Mattick J.S."/>
            <person name="Hume D.A."/>
            <person name="Kai C."/>
            <person name="Sasaki D."/>
            <person name="Tomaru Y."/>
            <person name="Fukuda S."/>
            <person name="Kanamori-Katayama M."/>
            <person name="Suzuki M."/>
            <person name="Aoki J."/>
            <person name="Arakawa T."/>
            <person name="Iida J."/>
            <person name="Imamura K."/>
            <person name="Itoh M."/>
            <person name="Kato T."/>
            <person name="Kawaji H."/>
            <person name="Kawagashira N."/>
            <person name="Kawashima T."/>
            <person name="Kojima M."/>
            <person name="Kondo S."/>
            <person name="Konno H."/>
            <person name="Nakano K."/>
            <person name="Ninomiya N."/>
            <person name="Nishio T."/>
            <person name="Okada M."/>
            <person name="Plessy C."/>
            <person name="Shibata K."/>
            <person name="Shiraki T."/>
            <person name="Suzuki S."/>
            <person name="Tagami M."/>
            <person name="Waki K."/>
            <person name="Watahiki A."/>
            <person name="Okamura-Oho Y."/>
            <person name="Suzuki H."/>
            <person name="Kawai J."/>
            <person name="Hayashizaki Y."/>
        </authorList>
    </citation>
    <scope>NUCLEOTIDE SEQUENCE [LARGE SCALE MRNA]</scope>
    <source>
        <strain>C57BL/6J</strain>
        <tissue>Bone marrow</tissue>
        <tissue>Kidney</tissue>
        <tissue>Small intestine</tissue>
        <tissue>Testis</tissue>
    </source>
</reference>
<reference key="6">
    <citation type="journal article" date="2009" name="PLoS Biol.">
        <title>Lineage-specific biology revealed by a finished genome assembly of the mouse.</title>
        <authorList>
            <person name="Church D.M."/>
            <person name="Goodstadt L."/>
            <person name="Hillier L.W."/>
            <person name="Zody M.C."/>
            <person name="Goldstein S."/>
            <person name="She X."/>
            <person name="Bult C.J."/>
            <person name="Agarwala R."/>
            <person name="Cherry J.L."/>
            <person name="DiCuccio M."/>
            <person name="Hlavina W."/>
            <person name="Kapustin Y."/>
            <person name="Meric P."/>
            <person name="Maglott D."/>
            <person name="Birtle Z."/>
            <person name="Marques A.C."/>
            <person name="Graves T."/>
            <person name="Zhou S."/>
            <person name="Teague B."/>
            <person name="Potamousis K."/>
            <person name="Churas C."/>
            <person name="Place M."/>
            <person name="Herschleb J."/>
            <person name="Runnheim R."/>
            <person name="Forrest D."/>
            <person name="Amos-Landgraf J."/>
            <person name="Schwartz D.C."/>
            <person name="Cheng Z."/>
            <person name="Lindblad-Toh K."/>
            <person name="Eichler E.E."/>
            <person name="Ponting C.P."/>
        </authorList>
    </citation>
    <scope>NUCLEOTIDE SEQUENCE [LARGE SCALE GENOMIC DNA]</scope>
    <source>
        <strain>C57BL/6J</strain>
    </source>
</reference>
<reference key="7">
    <citation type="journal article" date="2004" name="Genome Res.">
        <title>The status, quality, and expansion of the NIH full-length cDNA project: the Mammalian Gene Collection (MGC).</title>
        <authorList>
            <consortium name="The MGC Project Team"/>
        </authorList>
    </citation>
    <scope>NUCLEOTIDE SEQUENCE [LARGE SCALE MRNA]</scope>
    <source>
        <strain>C57BL/6J</strain>
        <tissue>Brain</tissue>
    </source>
</reference>
<reference key="8">
    <citation type="journal article" date="2010" name="Cell">
        <title>A tissue-specific atlas of mouse protein phosphorylation and expression.</title>
        <authorList>
            <person name="Huttlin E.L."/>
            <person name="Jedrychowski M.P."/>
            <person name="Elias J.E."/>
            <person name="Goswami T."/>
            <person name="Rad R."/>
            <person name="Beausoleil S.A."/>
            <person name="Villen J."/>
            <person name="Haas W."/>
            <person name="Sowa M.E."/>
            <person name="Gygi S.P."/>
        </authorList>
    </citation>
    <scope>IDENTIFICATION BY MASS SPECTROMETRY [LARGE SCALE ANALYSIS]</scope>
    <source>
        <tissue>Brown adipose tissue</tissue>
        <tissue>Kidney</tissue>
        <tissue>Liver</tissue>
        <tissue>Pancreas</tissue>
        <tissue>Spleen</tissue>
    </source>
</reference>
<reference key="9">
    <citation type="journal article" date="2013" name="Mol. Cell">
        <title>SIRT5-mediated lysine desuccinylation impacts diverse metabolic pathways.</title>
        <authorList>
            <person name="Park J."/>
            <person name="Chen Y."/>
            <person name="Tishkoff D.X."/>
            <person name="Peng C."/>
            <person name="Tan M."/>
            <person name="Dai L."/>
            <person name="Xie Z."/>
            <person name="Zhang Y."/>
            <person name="Zwaans B.M."/>
            <person name="Skinner M.E."/>
            <person name="Lombard D.B."/>
            <person name="Zhao Y."/>
        </authorList>
    </citation>
    <scope>SUCCINYLATION [LARGE SCALE ANALYSIS] AT LYS-125</scope>
    <scope>IDENTIFICATION BY MASS SPECTROMETRY [LARGE SCALE ANALYSIS]</scope>
    <source>
        <tissue>Embryonic fibroblast</tissue>
    </source>
</reference>
<reference evidence="5 6" key="10">
    <citation type="journal article" date="2022" name="Nature">
        <title>A male germ-cell-specific ribosome controls male fertility.</title>
        <authorList>
            <person name="Li H."/>
            <person name="Huo Y."/>
            <person name="He X."/>
            <person name="Yao L."/>
            <person name="Zhang H."/>
            <person name="Cui Y."/>
            <person name="Xiao H."/>
            <person name="Xie W."/>
            <person name="Zhang D."/>
            <person name="Wang Y."/>
            <person name="Zhang S."/>
            <person name="Tu H."/>
            <person name="Cheng Y."/>
            <person name="Guo Y."/>
            <person name="Cao X."/>
            <person name="Zhu Y."/>
            <person name="Jiang T."/>
            <person name="Guo X."/>
            <person name="Qin Y."/>
            <person name="Sha J."/>
        </authorList>
    </citation>
    <scope>STRUCTURE BY ELECTRON MICROSCOPY (3.03 ANGSTROMS) OF 75-133 (40S RIBOSOMAL PROTEIN S30)</scope>
</reference>
<feature type="chain" id="PRO_0000174000" description="Ubiquitin-like FUBI-ribosomal protein eS30 fusion protein">
    <location>
        <begin position="1"/>
        <end position="133"/>
    </location>
</feature>
<feature type="chain" id="PRO_0000457810" description="Ubiquitin-like protein FUBI">
    <location>
        <begin position="1"/>
        <end position="74"/>
    </location>
</feature>
<feature type="chain" id="PRO_0000457811" description="Small ribosomal subunit protein eS30">
    <location>
        <begin position="75"/>
        <end position="133"/>
    </location>
</feature>
<feature type="region of interest" description="Disordered" evidence="2">
    <location>
        <begin position="84"/>
        <end position="110"/>
    </location>
</feature>
<feature type="compositionally biased region" description="Basic residues" evidence="2">
    <location>
        <begin position="97"/>
        <end position="110"/>
    </location>
</feature>
<feature type="modified residue" description="N6-succinyllysine" evidence="7">
    <location>
        <position position="125"/>
    </location>
</feature>
<gene>
    <name type="primary">Fau</name>
</gene>
<comment type="function">
    <molecule>Ubiquitin-like protein FUBI</molecule>
    <text evidence="1">May have pro-apoptotic activity.</text>
</comment>
<comment type="function">
    <molecule>Small ribosomal subunit protein eS30</molecule>
    <text evidence="1 3">Component of the 40S subunit of the ribosome (PubMed:36517592). Contributes to the assembly and function of 40S ribosomal subunits (By similarity).</text>
</comment>
<comment type="subunit">
    <molecule>Small ribosomal subunit protein eS30</molecule>
    <text evidence="3">Component of the 40S subunit of the ribosome.</text>
</comment>
<comment type="interaction">
    <interactant intactId="EBI-309546">
        <id>P62862</id>
    </interactant>
    <interactant intactId="EBI-8296066">
        <id>Q9CPT0</id>
        <label>Bcl2l14</label>
    </interactant>
    <organismsDiffer>false</organismsDiffer>
    <experiments>4</experiments>
</comment>
<comment type="interaction">
    <interactant intactId="EBI-309546">
        <id>P62862</id>
    </interactant>
    <interactant intactId="EBI-642935">
        <id>Q62419</id>
        <label>Sh3gl1</label>
    </interactant>
    <organismsDiffer>false</organismsDiffer>
    <experiments>3</experiments>
</comment>
<comment type="subcellular location">
    <molecule>Small ribosomal subunit protein eS30</molecule>
    <subcellularLocation>
        <location evidence="1">Nucleus</location>
    </subcellularLocation>
    <subcellularLocation>
        <location evidence="3">Cytoplasm</location>
    </subcellularLocation>
</comment>
<comment type="PTM">
    <text evidence="1">FUBI is cleaved from ribosomal protein S30 by the deubiquitinase USP36 before the assembly of ribosomal protein S30 into pre-40S ribosomal particles. FUBI removal from ribosomal protein S30 is a crucial event for the final maturation of pre-40S particles.</text>
</comment>
<comment type="miscellaneous">
    <text evidence="1">FAU encodes a fusion protein consisting of the ubiquitin-like protein FUBI at the N terminus and ribosomal protein S30 at the C terminus.</text>
</comment>
<comment type="miscellaneous">
    <molecule>Ubiquitin-like protein FUBI</molecule>
    <text evidence="1">Lacks the typical lysine residues that participate in Ub's polyubiquitination. However contains a C-terminal di-glycine signature after its proteolytic separation from ribosomal protein S30 and could theoretically be conjugated onto target proteins.</text>
</comment>
<comment type="similarity">
    <text evidence="4">In the N-terminal section; belongs to the ubiquitin family.</text>
</comment>
<comment type="similarity">
    <text evidence="4">In the C-terminal section; belongs to the eukaryotic ribosomal protein eS30 family.</text>
</comment>
<organism>
    <name type="scientific">Mus musculus</name>
    <name type="common">Mouse</name>
    <dbReference type="NCBI Taxonomy" id="10090"/>
    <lineage>
        <taxon>Eukaryota</taxon>
        <taxon>Metazoa</taxon>
        <taxon>Chordata</taxon>
        <taxon>Craniata</taxon>
        <taxon>Vertebrata</taxon>
        <taxon>Euteleostomi</taxon>
        <taxon>Mammalia</taxon>
        <taxon>Eutheria</taxon>
        <taxon>Euarchontoglires</taxon>
        <taxon>Glires</taxon>
        <taxon>Rodentia</taxon>
        <taxon>Myomorpha</taxon>
        <taxon>Muroidea</taxon>
        <taxon>Muridae</taxon>
        <taxon>Murinae</taxon>
        <taxon>Mus</taxon>
        <taxon>Mus</taxon>
    </lineage>
</organism>
<proteinExistence type="evidence at protein level"/>
<dbReference type="EMBL" id="X65922">
    <property type="protein sequence ID" value="CAA46715.1"/>
    <property type="molecule type" value="mRNA"/>
</dbReference>
<dbReference type="EMBL" id="D26610">
    <property type="protein sequence ID" value="BAA05655.1"/>
    <property type="molecule type" value="mRNA"/>
</dbReference>
<dbReference type="EMBL" id="L33715">
    <property type="protein sequence ID" value="AAA91564.1"/>
    <property type="molecule type" value="Genomic_DNA"/>
</dbReference>
<dbReference type="EMBL" id="AF147745">
    <property type="protein sequence ID" value="AAF80246.1"/>
    <property type="molecule type" value="mRNA"/>
</dbReference>
<dbReference type="EMBL" id="AK002355">
    <property type="protein sequence ID" value="BAB22034.1"/>
    <property type="molecule type" value="mRNA"/>
</dbReference>
<dbReference type="EMBL" id="AK008466">
    <property type="protein sequence ID" value="BAB25684.1"/>
    <property type="molecule type" value="mRNA"/>
</dbReference>
<dbReference type="EMBL" id="AK132752">
    <property type="protein sequence ID" value="BAE21333.1"/>
    <property type="molecule type" value="mRNA"/>
</dbReference>
<dbReference type="EMBL" id="AK151211">
    <property type="protein sequence ID" value="BAE30206.1"/>
    <property type="molecule type" value="mRNA"/>
</dbReference>
<dbReference type="EMBL" id="AK151465">
    <property type="protein sequence ID" value="BAE30423.1"/>
    <property type="molecule type" value="mRNA"/>
</dbReference>
<dbReference type="EMBL" id="AK152738">
    <property type="protein sequence ID" value="BAE31458.1"/>
    <property type="molecule type" value="mRNA"/>
</dbReference>
<dbReference type="EMBL" id="BC058691">
    <property type="protein sequence ID" value="AAH58691.1"/>
    <property type="molecule type" value="mRNA"/>
</dbReference>
<dbReference type="EMBL" id="BC062873">
    <property type="protein sequence ID" value="AAH62873.1"/>
    <property type="molecule type" value="mRNA"/>
</dbReference>
<dbReference type="EMBL" id="BC081463">
    <property type="protein sequence ID" value="AAH81463.1"/>
    <property type="molecule type" value="mRNA"/>
</dbReference>
<dbReference type="CCDS" id="CCDS29489.1"/>
<dbReference type="PIR" id="I48346">
    <property type="entry name" value="I48346"/>
</dbReference>
<dbReference type="RefSeq" id="NP_001153711.1">
    <property type="nucleotide sequence ID" value="NM_001160239.3"/>
</dbReference>
<dbReference type="RefSeq" id="NP_001177365.1">
    <property type="nucleotide sequence ID" value="NM_001190436.2"/>
</dbReference>
<dbReference type="RefSeq" id="NP_032016.1">
    <property type="nucleotide sequence ID" value="NM_007990.4"/>
</dbReference>
<dbReference type="PDB" id="7CPU">
    <property type="method" value="EM"/>
    <property type="resolution" value="2.82 A"/>
    <property type="chains" value="Se=75-133"/>
</dbReference>
<dbReference type="PDB" id="7CPV">
    <property type="method" value="EM"/>
    <property type="resolution" value="3.03 A"/>
    <property type="chains" value="Se=75-133"/>
</dbReference>
<dbReference type="PDB" id="7LS1">
    <property type="method" value="EM"/>
    <property type="resolution" value="3.30 A"/>
    <property type="chains" value="T3=1-133"/>
</dbReference>
<dbReference type="PDB" id="7LS2">
    <property type="method" value="EM"/>
    <property type="resolution" value="3.10 A"/>
    <property type="chains" value="T3=1-133"/>
</dbReference>
<dbReference type="PDBsum" id="7CPU"/>
<dbReference type="PDBsum" id="7CPV"/>
<dbReference type="PDBsum" id="7LS1"/>
<dbReference type="PDBsum" id="7LS2"/>
<dbReference type="EMDB" id="EMD-23500"/>
<dbReference type="EMDB" id="EMD-23501"/>
<dbReference type="EMDB" id="EMD-30432"/>
<dbReference type="EMDB" id="EMD-30433"/>
<dbReference type="SMR" id="P62862"/>
<dbReference type="BioGRID" id="199600">
    <property type="interactions" value="9"/>
</dbReference>
<dbReference type="ComplexPortal" id="CPX-5261">
    <property type="entry name" value="40S cytosolic small ribosomal subunit"/>
</dbReference>
<dbReference type="FunCoup" id="P62862">
    <property type="interactions" value="152"/>
</dbReference>
<dbReference type="IntAct" id="P62862">
    <property type="interactions" value="3"/>
</dbReference>
<dbReference type="MINT" id="P62862"/>
<dbReference type="STRING" id="10090.ENSMUSP00000136358"/>
<dbReference type="GlyGen" id="P62862">
    <property type="glycosylation" value="1 site, 1 O-linked glycan (1 site)"/>
</dbReference>
<dbReference type="iPTMnet" id="P62862"/>
<dbReference type="PhosphoSitePlus" id="P62862"/>
<dbReference type="jPOST" id="P62862"/>
<dbReference type="PaxDb" id="10090-ENSMUSP00000128416"/>
<dbReference type="PeptideAtlas" id="P62862"/>
<dbReference type="ProteomicsDB" id="260846"/>
<dbReference type="ProteomicsDB" id="298353"/>
<dbReference type="ProteomicsDB" id="339100"/>
<dbReference type="Pumba" id="P62862"/>
<dbReference type="TopDownProteomics" id="P62862"/>
<dbReference type="Antibodypedia" id="29676">
    <property type="antibodies" value="376 antibodies from 31 providers"/>
</dbReference>
<dbReference type="DNASU" id="14109"/>
<dbReference type="Ensembl" id="ENSMUST00000043074.14">
    <property type="protein sequence ID" value="ENSMUSP00000042835.6"/>
    <property type="gene ID" value="ENSMUSG00000038274.14"/>
</dbReference>
<dbReference type="Ensembl" id="ENSMUST00000178310.9">
    <property type="protein sequence ID" value="ENSMUSP00000136803.2"/>
    <property type="gene ID" value="ENSMUSG00000038274.14"/>
</dbReference>
<dbReference type="Ensembl" id="ENSMUST00000179142.2">
    <property type="protein sequence ID" value="ENSMUSP00000136358.2"/>
    <property type="gene ID" value="ENSMUSG00000038274.14"/>
</dbReference>
<dbReference type="Ensembl" id="ENSMUST00000236217.2">
    <property type="protein sequence ID" value="ENSMUSP00000157416.2"/>
    <property type="gene ID" value="ENSMUSG00000038274.14"/>
</dbReference>
<dbReference type="Ensembl" id="ENSMUST00000237840.2">
    <property type="protein sequence ID" value="ENSMUSP00000157878.2"/>
    <property type="gene ID" value="ENSMUSG00000038274.14"/>
</dbReference>
<dbReference type="GeneID" id="14109"/>
<dbReference type="KEGG" id="mmu:14109"/>
<dbReference type="AGR" id="MGI:102547"/>
<dbReference type="CTD" id="2197"/>
<dbReference type="MGI" id="MGI:102547">
    <property type="gene designation" value="Fau"/>
</dbReference>
<dbReference type="VEuPathDB" id="HostDB:ENSMUSG00000038274"/>
<dbReference type="eggNOG" id="KOG0001">
    <property type="taxonomic scope" value="Eukaryota"/>
</dbReference>
<dbReference type="eggNOG" id="KOG0009">
    <property type="taxonomic scope" value="Eukaryota"/>
</dbReference>
<dbReference type="GeneTree" id="ENSGT00390000007479"/>
<dbReference type="HOGENOM" id="CLU_010412_5_0_1"/>
<dbReference type="OMA" id="FRRIQYT"/>
<dbReference type="OrthoDB" id="199599at2759"/>
<dbReference type="TreeFam" id="TF313779"/>
<dbReference type="Reactome" id="R-MMU-156827">
    <property type="pathway name" value="L13a-mediated translational silencing of Ceruloplasmin expression"/>
</dbReference>
<dbReference type="Reactome" id="R-MMU-1799339">
    <property type="pathway name" value="SRP-dependent cotranslational protein targeting to membrane"/>
</dbReference>
<dbReference type="Reactome" id="R-MMU-6791226">
    <property type="pathway name" value="Major pathway of rRNA processing in the nucleolus and cytosol"/>
</dbReference>
<dbReference type="Reactome" id="R-MMU-72649">
    <property type="pathway name" value="Translation initiation complex formation"/>
</dbReference>
<dbReference type="Reactome" id="R-MMU-72689">
    <property type="pathway name" value="Formation of a pool of free 40S subunits"/>
</dbReference>
<dbReference type="Reactome" id="R-MMU-72695">
    <property type="pathway name" value="Formation of the ternary complex, and subsequently, the 43S complex"/>
</dbReference>
<dbReference type="Reactome" id="R-MMU-72702">
    <property type="pathway name" value="Ribosomal scanning and start codon recognition"/>
</dbReference>
<dbReference type="Reactome" id="R-MMU-72706">
    <property type="pathway name" value="GTP hydrolysis and joining of the 60S ribosomal subunit"/>
</dbReference>
<dbReference type="Reactome" id="R-MMU-975956">
    <property type="pathway name" value="Nonsense Mediated Decay (NMD) independent of the Exon Junction Complex (EJC)"/>
</dbReference>
<dbReference type="Reactome" id="R-MMU-975957">
    <property type="pathway name" value="Nonsense Mediated Decay (NMD) enhanced by the Exon Junction Complex (EJC)"/>
</dbReference>
<dbReference type="BioGRID-ORCS" id="14109">
    <property type="hits" value="28 hits in 62 CRISPR screens"/>
</dbReference>
<dbReference type="CD-CODE" id="CE726F99">
    <property type="entry name" value="Postsynaptic density"/>
</dbReference>
<dbReference type="ChiTaRS" id="Fau">
    <property type="organism name" value="mouse"/>
</dbReference>
<dbReference type="PRO" id="PR:P62862"/>
<dbReference type="Proteomes" id="UP000000589">
    <property type="component" value="Chromosome 19"/>
</dbReference>
<dbReference type="Bgee" id="ENSMUSG00000038274">
    <property type="expression patterns" value="Expressed in spleen and 65 other cell types or tissues"/>
</dbReference>
<dbReference type="GO" id="GO:0005737">
    <property type="term" value="C:cytoplasm"/>
    <property type="evidence" value="ECO:0000303"/>
    <property type="project" value="ComplexPortal"/>
</dbReference>
<dbReference type="GO" id="GO:0022627">
    <property type="term" value="C:cytosolic small ribosomal subunit"/>
    <property type="evidence" value="ECO:0000314"/>
    <property type="project" value="UniProtKB"/>
</dbReference>
<dbReference type="GO" id="GO:0005615">
    <property type="term" value="C:extracellular space"/>
    <property type="evidence" value="ECO:0007669"/>
    <property type="project" value="Ensembl"/>
</dbReference>
<dbReference type="GO" id="GO:0005634">
    <property type="term" value="C:nucleus"/>
    <property type="evidence" value="ECO:0007669"/>
    <property type="project" value="UniProtKB-SubCell"/>
</dbReference>
<dbReference type="GO" id="GO:0003735">
    <property type="term" value="F:structural constituent of ribosome"/>
    <property type="evidence" value="ECO:0000314"/>
    <property type="project" value="UniProtKB"/>
</dbReference>
<dbReference type="GO" id="GO:0019731">
    <property type="term" value="P:antibacterial humoral response"/>
    <property type="evidence" value="ECO:0007669"/>
    <property type="project" value="Ensembl"/>
</dbReference>
<dbReference type="GO" id="GO:0061844">
    <property type="term" value="P:antimicrobial humoral immune response mediated by antimicrobial peptide"/>
    <property type="evidence" value="ECO:0000314"/>
    <property type="project" value="UniProtKB"/>
</dbReference>
<dbReference type="GO" id="GO:0002181">
    <property type="term" value="P:cytoplasmic translation"/>
    <property type="evidence" value="ECO:0000303"/>
    <property type="project" value="ComplexPortal"/>
</dbReference>
<dbReference type="GO" id="GO:0050830">
    <property type="term" value="P:defense response to Gram-positive bacterium"/>
    <property type="evidence" value="ECO:0000314"/>
    <property type="project" value="UniProtKB"/>
</dbReference>
<dbReference type="GO" id="GO:0002227">
    <property type="term" value="P:innate immune response in mucosa"/>
    <property type="evidence" value="ECO:0007669"/>
    <property type="project" value="Ensembl"/>
</dbReference>
<dbReference type="CDD" id="cd01793">
    <property type="entry name" value="Ubl_FUBI"/>
    <property type="match status" value="1"/>
</dbReference>
<dbReference type="FunFam" id="3.10.20.90:FF:000114">
    <property type="entry name" value="40S ribosomal protein S30"/>
    <property type="match status" value="1"/>
</dbReference>
<dbReference type="Gene3D" id="3.10.20.90">
    <property type="entry name" value="Phosphatidylinositol 3-kinase Catalytic Subunit, Chain A, domain 1"/>
    <property type="match status" value="1"/>
</dbReference>
<dbReference type="InterPro" id="IPR039415">
    <property type="entry name" value="FUBI"/>
</dbReference>
<dbReference type="InterPro" id="IPR006846">
    <property type="entry name" value="Ribosomal_eS30"/>
</dbReference>
<dbReference type="InterPro" id="IPR000626">
    <property type="entry name" value="Ubiquitin-like_dom"/>
</dbReference>
<dbReference type="InterPro" id="IPR029071">
    <property type="entry name" value="Ubiquitin-like_domsf"/>
</dbReference>
<dbReference type="InterPro" id="IPR019954">
    <property type="entry name" value="Ubiquitin_CS"/>
</dbReference>
<dbReference type="InterPro" id="IPR019956">
    <property type="entry name" value="Ubiquitin_dom"/>
</dbReference>
<dbReference type="PANTHER" id="PTHR12650">
    <property type="entry name" value="40S RIBOSOMAL PROTEIN S30/UBIQUITIN-LIKE PROTEIN FUBI"/>
    <property type="match status" value="1"/>
</dbReference>
<dbReference type="PANTHER" id="PTHR12650:SF15">
    <property type="entry name" value="RIBOSOMAL PROTEIN S30, ISOFORM A"/>
    <property type="match status" value="1"/>
</dbReference>
<dbReference type="Pfam" id="PF04758">
    <property type="entry name" value="Ribosomal_S30"/>
    <property type="match status" value="1"/>
</dbReference>
<dbReference type="Pfam" id="PF00240">
    <property type="entry name" value="ubiquitin"/>
    <property type="match status" value="1"/>
</dbReference>
<dbReference type="PRINTS" id="PR00348">
    <property type="entry name" value="UBIQUITIN"/>
</dbReference>
<dbReference type="SMART" id="SM00213">
    <property type="entry name" value="UBQ"/>
    <property type="match status" value="1"/>
</dbReference>
<dbReference type="SUPFAM" id="SSF54236">
    <property type="entry name" value="Ubiquitin-like"/>
    <property type="match status" value="1"/>
</dbReference>
<dbReference type="PROSITE" id="PS00299">
    <property type="entry name" value="UBIQUITIN_1"/>
    <property type="match status" value="1"/>
</dbReference>
<dbReference type="PROSITE" id="PS50053">
    <property type="entry name" value="UBIQUITIN_2"/>
    <property type="match status" value="1"/>
</dbReference>
<keyword id="KW-0002">3D-structure</keyword>
<keyword id="KW-0963">Cytoplasm</keyword>
<keyword id="KW-0539">Nucleus</keyword>
<keyword id="KW-1185">Reference proteome</keyword>
<keyword id="KW-0687">Ribonucleoprotein</keyword>
<keyword id="KW-0689">Ribosomal protein</keyword>